<accession>Q7MLI9</accession>
<dbReference type="EMBL" id="BA000037">
    <property type="protein sequence ID" value="BAC94202.1"/>
    <property type="status" value="ALT_INIT"/>
    <property type="molecule type" value="Genomic_DNA"/>
</dbReference>
<dbReference type="RefSeq" id="WP_011080657.1">
    <property type="nucleotide sequence ID" value="NC_005139.1"/>
</dbReference>
<dbReference type="SMR" id="Q7MLI9"/>
<dbReference type="STRING" id="672.VV93_v1c13500"/>
<dbReference type="KEGG" id="vvy:VV1438"/>
<dbReference type="eggNOG" id="COG2985">
    <property type="taxonomic scope" value="Bacteria"/>
</dbReference>
<dbReference type="eggNOG" id="COG3273">
    <property type="taxonomic scope" value="Bacteria"/>
</dbReference>
<dbReference type="HOGENOM" id="CLU_035023_2_2_6"/>
<dbReference type="Proteomes" id="UP000002675">
    <property type="component" value="Chromosome I"/>
</dbReference>
<dbReference type="GO" id="GO:0005886">
    <property type="term" value="C:plasma membrane"/>
    <property type="evidence" value="ECO:0007669"/>
    <property type="project" value="UniProtKB-SubCell"/>
</dbReference>
<dbReference type="GO" id="GO:0008324">
    <property type="term" value="F:monoatomic cation transmembrane transporter activity"/>
    <property type="evidence" value="ECO:0007669"/>
    <property type="project" value="InterPro"/>
</dbReference>
<dbReference type="GO" id="GO:0006813">
    <property type="term" value="P:potassium ion transport"/>
    <property type="evidence" value="ECO:0007669"/>
    <property type="project" value="InterPro"/>
</dbReference>
<dbReference type="Gene3D" id="3.30.70.1450">
    <property type="entry name" value="Regulator of K+ conductance, C-terminal domain"/>
    <property type="match status" value="2"/>
</dbReference>
<dbReference type="HAMAP" id="MF_01015">
    <property type="entry name" value="YbjL"/>
    <property type="match status" value="1"/>
</dbReference>
<dbReference type="InterPro" id="IPR050144">
    <property type="entry name" value="AAE_transporter"/>
</dbReference>
<dbReference type="InterPro" id="IPR006037">
    <property type="entry name" value="RCK_C"/>
</dbReference>
<dbReference type="InterPro" id="IPR036721">
    <property type="entry name" value="RCK_C_sf"/>
</dbReference>
<dbReference type="InterPro" id="IPR023017">
    <property type="entry name" value="Transp_YbjL_put"/>
</dbReference>
<dbReference type="InterPro" id="IPR006512">
    <property type="entry name" value="YidE_YbjL"/>
</dbReference>
<dbReference type="NCBIfam" id="NF003440">
    <property type="entry name" value="PRK04972.1"/>
    <property type="match status" value="1"/>
</dbReference>
<dbReference type="NCBIfam" id="TIGR01625">
    <property type="entry name" value="YidE_YbjL_dupl"/>
    <property type="match status" value="2"/>
</dbReference>
<dbReference type="PANTHER" id="PTHR30445">
    <property type="entry name" value="K(+)_H(+) ANTIPORTER SUBUNIT KHTT"/>
    <property type="match status" value="1"/>
</dbReference>
<dbReference type="PANTHER" id="PTHR30445:SF10">
    <property type="entry name" value="TRANSPORT PROTEIN YBJL-RELATED"/>
    <property type="match status" value="1"/>
</dbReference>
<dbReference type="Pfam" id="PF06826">
    <property type="entry name" value="Asp-Al_Ex"/>
    <property type="match status" value="2"/>
</dbReference>
<dbReference type="Pfam" id="PF02080">
    <property type="entry name" value="TrkA_C"/>
    <property type="match status" value="2"/>
</dbReference>
<dbReference type="SUPFAM" id="SSF116726">
    <property type="entry name" value="TrkA C-terminal domain-like"/>
    <property type="match status" value="2"/>
</dbReference>
<dbReference type="PROSITE" id="PS51202">
    <property type="entry name" value="RCK_C"/>
    <property type="match status" value="2"/>
</dbReference>
<comment type="subcellular location">
    <subcellularLocation>
        <location evidence="1">Cell membrane</location>
        <topology evidence="1">Multi-pass membrane protein</topology>
    </subcellularLocation>
</comment>
<comment type="similarity">
    <text evidence="1">Belongs to the AAE transporter (TC 2.A.81) family. YbjL subfamily.</text>
</comment>
<comment type="sequence caution" evidence="2">
    <conflict type="erroneous initiation">
        <sequence resource="EMBL-CDS" id="BAC94202"/>
    </conflict>
</comment>
<organism>
    <name type="scientific">Vibrio vulnificus (strain YJ016)</name>
    <dbReference type="NCBI Taxonomy" id="196600"/>
    <lineage>
        <taxon>Bacteria</taxon>
        <taxon>Pseudomonadati</taxon>
        <taxon>Pseudomonadota</taxon>
        <taxon>Gammaproteobacteria</taxon>
        <taxon>Vibrionales</taxon>
        <taxon>Vibrionaceae</taxon>
        <taxon>Vibrio</taxon>
    </lineage>
</organism>
<sequence length="560" mass="60656">MNIDVVLLLQQNPILLIFVVLAIGLAFGKVRIANMQLGNSIGVLITSLIMGHLGFSFNAEALTIGFMLFIYCVGIEAGPNFFGIFFRDGKHYFTLSMVVLVTAVSISYFASHYMGLDFGLSAGMMAGALTATPVLVGAQDALNSGLATIPRNMEFSLVLENLSVGYAMAYLVGLISMIMFAKLLPRLQKQNLSDSAQQIAQERGLGGSGQRKVYLPIIRAYRVGPELINWTDGKNLRELGIYRQTGCYIERIRRHGILAHPDGDAILQEGDEIALVGFPDSHARLDPSFRNGKEVFDRNLLDLRIVEEEIVVKSDAIAGKRLSDLNLSEYGCFLNRVIRAQIEMPMDLDIVLAKGDILQVSGEKSRVHGLAERIGFISIHSQIADLLAFCSFFILGIMFGLVTMTFGQVSFSLGNAVGLLLSGITLGFLRANHPTFGYVPQGALNMVKDLGLMIFMVGIGLSAGGKMFEHLTQVGPQIIGIAFLVSVVPVFFAYLVGAYVLKMNRALLFGAIIGARTCAPAMDIVNEYAKSTIPALGYAGTYAIANILMTLAGTILIILS</sequence>
<reference key="1">
    <citation type="journal article" date="2003" name="Genome Res.">
        <title>Comparative genome analysis of Vibrio vulnificus, a marine pathogen.</title>
        <authorList>
            <person name="Chen C.-Y."/>
            <person name="Wu K.-M."/>
            <person name="Chang Y.-C."/>
            <person name="Chang C.-H."/>
            <person name="Tsai H.-C."/>
            <person name="Liao T.-L."/>
            <person name="Liu Y.-M."/>
            <person name="Chen H.-J."/>
            <person name="Shen A.B.-T."/>
            <person name="Li J.-C."/>
            <person name="Su T.-L."/>
            <person name="Shao C.-P."/>
            <person name="Lee C.-T."/>
            <person name="Hor L.-I."/>
            <person name="Tsai S.-F."/>
        </authorList>
    </citation>
    <scope>NUCLEOTIDE SEQUENCE [LARGE SCALE GENOMIC DNA]</scope>
    <source>
        <strain>YJ016</strain>
    </source>
</reference>
<evidence type="ECO:0000255" key="1">
    <source>
        <dbReference type="HAMAP-Rule" id="MF_01015"/>
    </source>
</evidence>
<evidence type="ECO:0000305" key="2"/>
<name>Y1438_VIBVY</name>
<protein>
    <recommendedName>
        <fullName evidence="1">Putative transport protein VV1438</fullName>
    </recommendedName>
</protein>
<keyword id="KW-1003">Cell membrane</keyword>
<keyword id="KW-0472">Membrane</keyword>
<keyword id="KW-0677">Repeat</keyword>
<keyword id="KW-0812">Transmembrane</keyword>
<keyword id="KW-1133">Transmembrane helix</keyword>
<keyword id="KW-0813">Transport</keyword>
<proteinExistence type="inferred from homology"/>
<gene>
    <name type="ordered locus">VV1438</name>
</gene>
<feature type="chain" id="PRO_0000208794" description="Putative transport protein VV1438">
    <location>
        <begin position="1"/>
        <end position="560"/>
    </location>
</feature>
<feature type="transmembrane region" description="Helical" evidence="1">
    <location>
        <begin position="5"/>
        <end position="25"/>
    </location>
</feature>
<feature type="transmembrane region" description="Helical" evidence="1">
    <location>
        <begin position="37"/>
        <end position="57"/>
    </location>
</feature>
<feature type="transmembrane region" description="Helical" evidence="1">
    <location>
        <begin position="66"/>
        <end position="86"/>
    </location>
</feature>
<feature type="transmembrane region" description="Helical" evidence="1">
    <location>
        <begin position="91"/>
        <end position="111"/>
    </location>
</feature>
<feature type="transmembrane region" description="Helical" evidence="1">
    <location>
        <begin position="164"/>
        <end position="184"/>
    </location>
</feature>
<feature type="transmembrane region" description="Helical" evidence="1">
    <location>
        <begin position="386"/>
        <end position="406"/>
    </location>
</feature>
<feature type="transmembrane region" description="Helical" evidence="1">
    <location>
        <begin position="409"/>
        <end position="429"/>
    </location>
</feature>
<feature type="transmembrane region" description="Helical" evidence="1">
    <location>
        <begin position="443"/>
        <end position="463"/>
    </location>
</feature>
<feature type="transmembrane region" description="Helical" evidence="1">
    <location>
        <begin position="478"/>
        <end position="498"/>
    </location>
</feature>
<feature type="transmembrane region" description="Helical" evidence="1">
    <location>
        <begin position="506"/>
        <end position="526"/>
    </location>
</feature>
<feature type="transmembrane region" description="Helical" evidence="1">
    <location>
        <begin position="539"/>
        <end position="559"/>
    </location>
</feature>
<feature type="domain" description="RCK C-terminal 1" evidence="1">
    <location>
        <begin position="203"/>
        <end position="292"/>
    </location>
</feature>
<feature type="domain" description="RCK C-terminal 2" evidence="1">
    <location>
        <begin position="293"/>
        <end position="376"/>
    </location>
</feature>